<evidence type="ECO:0000250" key="1"/>
<evidence type="ECO:0000250" key="2">
    <source>
        <dbReference type="UniProtKB" id="P25304"/>
    </source>
</evidence>
<evidence type="ECO:0000255" key="3"/>
<evidence type="ECO:0000255" key="4">
    <source>
        <dbReference type="PROSITE-ProRule" id="PRU00076"/>
    </source>
</evidence>
<evidence type="ECO:0000255" key="5">
    <source>
        <dbReference type="PROSITE-ProRule" id="PRU00122"/>
    </source>
</evidence>
<evidence type="ECO:0000255" key="6">
    <source>
        <dbReference type="PROSITE-ProRule" id="PRU00188"/>
    </source>
</evidence>
<evidence type="ECO:0000255" key="7">
    <source>
        <dbReference type="PROSITE-ProRule" id="PRU00443"/>
    </source>
</evidence>
<evidence type="ECO:0000255" key="8">
    <source>
        <dbReference type="PROSITE-ProRule" id="PRU00460"/>
    </source>
</evidence>
<evidence type="ECO:0000255" key="9">
    <source>
        <dbReference type="PROSITE-ProRule" id="PRU00798"/>
    </source>
</evidence>
<evidence type="ECO:0000256" key="10">
    <source>
        <dbReference type="SAM" id="MobiDB-lite"/>
    </source>
</evidence>
<evidence type="ECO:0000269" key="11">
    <source>
    </source>
</evidence>
<evidence type="ECO:0000269" key="12">
    <source>
    </source>
</evidence>
<evidence type="ECO:0000269" key="13">
    <source>
    </source>
</evidence>
<evidence type="ECO:0000269" key="14">
    <source>
    </source>
</evidence>
<evidence type="ECO:0000269" key="15">
    <source>
    </source>
</evidence>
<evidence type="ECO:0000269" key="16">
    <source>
    </source>
</evidence>
<evidence type="ECO:0000269" key="17">
    <source>
    </source>
</evidence>
<evidence type="ECO:0000269" key="18">
    <source>
    </source>
</evidence>
<evidence type="ECO:0000269" key="19">
    <source>
    </source>
</evidence>
<evidence type="ECO:0000269" key="20">
    <source>
    </source>
</evidence>
<evidence type="ECO:0000269" key="21">
    <source>
    </source>
</evidence>
<evidence type="ECO:0000269" key="22">
    <source>
    </source>
</evidence>
<evidence type="ECO:0000269" key="23">
    <source>
    </source>
</evidence>
<evidence type="ECO:0000269" key="24">
    <source>
    </source>
</evidence>
<evidence type="ECO:0000303" key="25">
    <source>
    </source>
</evidence>
<evidence type="ECO:0000303" key="26">
    <source>
    </source>
</evidence>
<evidence type="ECO:0000305" key="27"/>
<evidence type="ECO:0007829" key="28">
    <source>
        <dbReference type="PDB" id="1JB3"/>
    </source>
</evidence>
<evidence type="ECO:0007829" key="29">
    <source>
        <dbReference type="PDB" id="1PXU"/>
    </source>
</evidence>
<evidence type="ECO:0007829" key="30">
    <source>
        <dbReference type="PDB" id="1PZ7"/>
    </source>
</evidence>
<comment type="function">
    <molecule>Isoform 1</molecule>
    <text>Heparan sulfate basal lamina glycoprotein that plays a central role in the formation and the maintenance of the neuromuscular junction (NMJ) and directs key events in postsynaptic differentiation. Component of the AGRN-LRP4 receptor complex that induces the phosphorylation and activation of MUSK. The activation of MUSK in myotubes induces the formation of NMJ by regulating different processes including the transcription of specific genes and the clustering of AChR in the postsynaptic membrane. Calcium ions are required for maximal AChR clustering. AGRN function in neurons is highly regulated by alternative splicing, glycan binding and proteolytic processing. Modulates calcium ion homeostasis in neurons, specifically by inducing an increase in cytoplasmic calcium ions. Functions differentially in the central nervous system (CNS) by inhibiting the alpha(3)-subtype of Na+/K+-ATPase and evoking depolarization at CNS synapses.</text>
</comment>
<comment type="function">
    <molecule>Isoform 9</molecule>
    <text>Transmembrane agrin (TM-agrin), the predominant form in neurons of the brain, induces dendritic filopodia and synapse formation in mature hippocampal neurons in large part due to the attached glycosaminoglycan chains and the action of Rho-family GTPases.</text>
</comment>
<comment type="function">
    <text>Isoform 2, isoform 4 and isoform 7: muscle agrin isoforms, which lack the 8-amino acid insert at the 'B' site, but with the insert at the'A' site have no AChr clustering activity nor MUSK activation but bind heparin. Bind alpha-dystroglycan with lower affinity.</text>
</comment>
<comment type="function">
    <molecule>Isoform 5</molecule>
    <text>Muscle agrin A0B0 lacking inserts at both 'A' and 'B' sites has no heparin-binding nor AChR clustering activity but binds strongly alpha-dystroglycan.</text>
</comment>
<comment type="function">
    <molecule>Agrin N-terminal 110 kDa subunit</molecule>
    <text evidence="1 12 16 18 19 20 21 22">Is involved in modulation of growth factor signaling (By similarity). Involved also in the regulation of neurite outgrowth probably due to the presence of the glycosaminoglcan (GAG) side chains of heparan and chondroitin sulfate attached to the Ser/Thr- and Gly/Ser-rich regions. Also involved in modulation of growth factor signaling.</text>
</comment>
<comment type="function">
    <molecule>Agrin C-terminal 22 kDa fragment</molecule>
    <text>This released fragment is important for agrin signaling and to exert a maximal dendritic filopodia-inducing effect. All 'B' splice variants of this fragment also show an increase in the number of filopodia.</text>
</comment>
<comment type="subunit">
    <text evidence="1 13 15 17 18 19 23 24">Monomer (By similarity). Interacts (N-terminal subunit) with TGF-beta family members, BMP2 and BMP4; the interactions inhibit the activity of these growth factors. Interacts with TGFB1; the interaction enhances the activity of TGFB1. Component of the AGRN-LRP4 complex that consists of a tetramer of two AGRN-LRP4 heterodimers. Interacts (via the laminin G-like 3 domain) directly with LRP4; the interaction is required for activation of MUSK and clustering of AChR and requires the 'B8' insert present in the B8 isoforms. Interacts with DAG1; the interaction is influenced by cell surface glycosaminoglycans and by alternative splicing of AGRN.</text>
</comment>
<comment type="interaction">
    <interactant intactId="EBI-457650">
        <id>P31696</id>
    </interactant>
    <interactant intactId="EBI-2431589">
        <id>PRO_0000000093</id>
        <label>APP</label>
        <dbReference type="UniProtKB" id="P05067"/>
    </interactant>
    <organismsDiffer>true</organismsDiffer>
    <experiments>3</experiments>
</comment>
<comment type="interaction">
    <interactant intactId="EBI-457650">
        <id>P31696</id>
    </interactant>
    <interactant intactId="EBI-6662997">
        <id>P02469</id>
        <label>Lamb1</label>
    </interactant>
    <organismsDiffer>true</organismsDiffer>
    <experiments>2</experiments>
</comment>
<comment type="subcellular location">
    <molecule>Isoform 1</molecule>
    <subcellularLocation>
        <location evidence="11 23">Secreted</location>
        <location evidence="11 23">Extracellular space</location>
        <location evidence="11 23">Extracellular matrix</location>
    </subcellularLocation>
    <text evidence="11">Synaptic basal lamina at the neuromuscular junction.</text>
</comment>
<comment type="subcellular location">
    <molecule>Isoform 9</molecule>
    <subcellularLocation>
        <location evidence="11">Synapse</location>
    </subcellularLocation>
    <subcellularLocation>
        <location evidence="11">Cell membrane</location>
        <topology evidence="11">Single-pass type II membrane protein</topology>
    </subcellularLocation>
</comment>
<comment type="alternative products">
    <event type="alternative splicing"/>
    <isoform>
        <id>P31696-1</id>
        <name>1</name>
        <name>LN-agrin</name>
        <name>agrin A4B19</name>
        <sequence type="displayed"/>
    </isoform>
    <isoform>
        <id>P31696-2</id>
        <name>2</name>
        <name>Agrin-related protein 1</name>
        <name>agrin A4B0</name>
        <sequence type="described" ref="VSP_045774"/>
    </isoform>
    <isoform>
        <id>P31696-3</id>
        <name>3</name>
        <name>Agrin-related protein 2</name>
        <name>agrin A4B8</name>
        <sequence type="described" ref="VSP_045776"/>
    </isoform>
    <isoform>
        <id>P31696-4</id>
        <name>4</name>
        <name>Agrin A4B11</name>
        <sequence type="described" ref="VSP_045775"/>
    </isoform>
    <isoform>
        <id>P31696-5</id>
        <name>5</name>
        <name>Muscle agrin</name>
        <name>agrin A0B0</name>
        <sequence type="described" ref="VSP_045773 VSP_045774"/>
    </isoform>
    <isoform>
        <id>P31696-6</id>
        <name>6</name>
        <name>Agrin A0B8</name>
        <sequence type="described" ref="VSP_045773 VSP_045776"/>
    </isoform>
    <isoform>
        <id>P31696-7</id>
        <name>7</name>
        <name>Muscle agrin</name>
        <name>agrin A0B11</name>
        <sequence type="described" ref="VSP_045773 VSP_045775"/>
    </isoform>
    <isoform>
        <id>P31696-8</id>
        <name>8</name>
        <name>Agrin A0B19</name>
        <sequence type="described" ref="VSP_045773"/>
    </isoform>
    <isoform>
        <id>P31696-9</id>
        <name>9</name>
        <name>TM-agrin</name>
        <name>SN-agrin</name>
        <sequence type="described" ref="VSP_045770 VSP_045771"/>
    </isoform>
    <isoform>
        <id>P31696-10</id>
        <name>10</name>
        <sequence type="described" ref="VSP_045772"/>
    </isoform>
    <text>Many isoforms exist including secreted and transmembrane forms, isoforms with different length inserts produced at the 'B' splice site, B0, B8, B11 and B19, with or without the 'A' splice site insert.</text>
</comment>
<comment type="tissue specificity">
    <text evidence="23">Detected in embryonic brain, spinal cord, skeletal muscle, vitreous humor and liver (at protein level).</text>
</comment>
<comment type="domain">
    <text>The 4 amino acid insert at the 'A' site is required for efficient binding of heparin.</text>
</comment>
<comment type="domain">
    <text>The NtA domain, absent in TM-Agrin, is required for binding laminin and connecting to basal lamina.</text>
</comment>
<comment type="domain">
    <text>Both laminin G-like 2 (G2) and laminin G-like 3 (G3) domains are required for alpha-dystroglycan binding. G3 domain is required for C-terminal heparin, heparan sulfate and sialic acid binding.</text>
</comment>
<comment type="PTM">
    <text evidence="1 14 23">Contains heparan and chondroitin sulfate chains and alpha-dystroglycan as well as N-linked and O-linked oligosaccharides. Glycosaminoglycans (GAGs), present in the N-terminal 110 kDa fragment, are required for induction of filopodia in hippocampal neurons. The first cluster (Gly/Ser-rich) for GAG attachment contains heparan sulfate (HS)chains and the second cluster (Ser/Thr-rich), contains chondroitin sulfate (CS) chains (PubMed:12773545). C-terminal heparin and heparin sulfate binding is independent of calcium ions. Binds heparin with a stoichiometry of 2:1. Binds sialic acid with a stoichiometry of 1:1 and binding requires calcium ions. Inserts at the 'B' site have no effect on sialic acid binding.</text>
</comment>
<comment type="PTM">
    <text evidence="1">At synaptic junctions, cleaved at two conserved sites, alpha and beta, by neurotrypsin. Cleavage at the alpha-site produces the N- and C- terminal 110-kDa subunits. Further cleavage of the C-terminal at the beta site produces C-terminal fragments, C22 and C90, of 90 kDa and 22 kDa respectively (By similarity).</text>
</comment>
<comment type="PTM">
    <text evidence="21">Proteolytically cleaved in vitro in both the N-terminal and C-terminal by several matrix metalloproteinases (MMPs).</text>
</comment>
<comment type="miscellaneous">
    <molecule>Isoform 9</molecule>
    <text evidence="27">Transmembrane isoform produced by usage of an alternative first exon.</text>
</comment>
<comment type="sequence caution" evidence="27">
    <conflict type="frameshift">
        <sequence resource="EMBL-CDS" id="AAA48585"/>
    </conflict>
</comment>
<sequence>MGGSGAAATLALGLALGLALGGWANCPERELQRREEEANVVLTGTVEEIMNVDPVHHTYSCKVRVWRYLKGKDIVTHEILLDGGNKVVIGGFGDPLICDNQVSTGDTRIFFVNPAPQYMWPAHRNELMLNSSLMRITLRNLEEVEHCVEEHRKLLADKPNSYFTQTPPTPRDACRGMLCGFGAVCERSPTDPSQASCVCKKTACPVVVAPVCGSDYSTYSNECELEKAQCNQQRRIKVISKGPCGSKDPCAEVTCSFGSTCVRSADGQTAGCVCPASCSGVAESIVCGSDGKDYRSECDLNKHACDKQENVFKKFDGACDPCKGILNDMNRVCRVNPRTRRVELLSRPENCPSKREPVCGDDGVTYASECVMGRTGAIRGLEIQKVRSGQCQHQDKCKDECKFNAVCLKRWHARCSCDRITCDGTYRPVCARDSRTYSNDCERQKAECHQKAAIPVKHSGPCDLGTPSPCLSVECTFGATCVVKNREPVCECQQVCQGRYDPVCGSDNRTYGNPCELNAMACVLKREIRVKHKGPCDRCGKCQFGAICEAETGRCVCPTECVPSSQPVCGTDGNTYGSECELHVRACTQQKNILVAAQGDCKSCGTTVCSFGSTCVGGQCVCPRCEQQPLAQVCGTDGLTYDNRCELRAASCQQQKSIEVAKMGPCEDECGSGGSGSGDGSECEQDRCRHYGGWWDEDAEDDRCVCDFTCLAVPRSPVCGSDDVTYANECELKKTRCEKRQNLYVTSQGACRALTTTPPPLPVVHCSQTIYGCCPDNMTLALGVGAAGCPSTCQCNPYGSYGGTCDPATGQCSCKPGVGGLKCDRCEPGFWNFRGIVTDSKSGCTPCNCDPVGSVRDDCEQMTGLCSCKTGITGMKCNQCPNGSKMGMAGCEKDPSAPKSCEEMSCEFGATCVEVNGFAHCECPSPLCSEANMTKVCGSDGVTYGDQCQLKTIACRQGQLITVKHVGQCHESITHTSHTMPPTPLPTLPLDKLIVPPPLQLTTQAPEPTELATTSLLMEASPTTRSHPTTRRVTTTRPVTTPWMTHGVLKTTVRPLSTSPVVLATTQPPYAESGSAEGSGDQEMSISGDQESSGAGSAGEEEVEESQVTPTPAIERATCYNTPLGCCSDGKTAAADAEGSNCPATKVFQGVLILEEVEGQELFYTPEMADPKSELFGETARSIESALDELFRNSDVKNDFKSIRVRDLGQSSAVRVIVESHFDPATSYTAADVQAASLKQIRASKKRTILVKKPQQEHVKFMDFDWIPRIFTTTITTTTATTMAPATTRRHTTASAATTAHILRQDTVGHPSAKLAAPASTRRPTSTLPTTARRKPTRQPPSTTKKPSRPCDSHPCLHGGTCEDDGREFTCRCPAGKGGAVCEKPIRYFIPSFGGKSYLAFKMMKAYHTVRIAMEFRATELSGLLLYNGQNRGKDFISLALVGGFVELRFNTGSGTGVITSKVRVEPGKWHQLVVNRNRRSGMLAVDGEHVSGESPTGTDGLNLDTDLFVGGAPEDQMAVVAERTAATVGLKGSIRLLDVNNQMYDLREKGSDVLYGSGVGECGNDPCHPNPCHHGASCHVKEAEMFHCECLHSYTGPTCADERNPCDPTPCHISATCLVLPEGGAMCACPMGREGEFCERVTEQDHTMPFLPEFNGFSYLELNGLQTLFLTCRQMSMEVVFLAKSPSGMIFYNGQKTDGKGDFVSLALHDGYLEYRYDLGKGAAVLRSKEPVPLNTWISVLLERSGRKGVMRINNGERVMGESPKSRKVPHAFLNLKEPFYVGGAPDFSKLARAAAISTSFYGAVQRISIKGVPLLKEQHIRSAVEISTFRAHPCTQKPNPCQNGGTCSPRLESYECACQRGFSGAHCEKVIIEKAAGDAEAIAFDGRTYMEYHNAVTKSHLSNEIPAPDALDYPAEPSEKALQSNHFELSIKTEATQGLILWSGKGLERSDYIALAIVDGFVQMMYDLGSKPVVLRSTVPINTNHWTHIKAYRVQREGSLQVGNEAPITGSSPLGATQLDTDGALWLGGMERLSVAHKLPKAYSTGFIGCIRDVIVDRQELHLVEDALNNPTILHCSAK</sequence>
<name>AGRIN_CHICK</name>
<proteinExistence type="evidence at protein level"/>
<feature type="signal peptide" evidence="3">
    <location>
        <begin position="1"/>
        <end position="24"/>
    </location>
</feature>
<feature type="chain" id="PRO_0000055624" description="Agrin">
    <location>
        <begin position="25"/>
        <end position="2081"/>
    </location>
</feature>
<feature type="chain" id="PRO_0000421629" description="Agrin N-terminal 110 kDa subunit">
    <location>
        <begin position="25"/>
        <end position="1116"/>
    </location>
</feature>
<feature type="chain" id="PRO_0000421630" description="Agrin C-terminal 110 kDa subunit">
    <location>
        <begin position="1117"/>
        <end position="2081"/>
    </location>
</feature>
<feature type="chain" id="PRO_0000421631" description="Agrin C-terminal 90 kDa fragment">
    <location>
        <begin position="1117"/>
        <end position="1876"/>
    </location>
</feature>
<feature type="chain" id="PRO_0000421632" description="Agrin C-terminal 22 kDa fragment">
    <location>
        <begin position="1877"/>
        <end position="2081"/>
    </location>
</feature>
<feature type="domain" description="NtA" evidence="7">
    <location>
        <begin position="26"/>
        <end position="159"/>
    </location>
</feature>
<feature type="domain" description="Kazal-like 1" evidence="9">
    <location>
        <begin position="193"/>
        <end position="246"/>
    </location>
</feature>
<feature type="domain" description="Kazal-like 2" evidence="9">
    <location>
        <begin position="268"/>
        <end position="321"/>
    </location>
</feature>
<feature type="domain" description="Kazal-like 3" evidence="9">
    <location>
        <begin position="339"/>
        <end position="393"/>
    </location>
</feature>
<feature type="domain" description="Kazal-like 4" evidence="9">
    <location>
        <begin position="409"/>
        <end position="464"/>
    </location>
</feature>
<feature type="domain" description="Kazal-like 5" evidence="9">
    <location>
        <begin position="486"/>
        <end position="538"/>
    </location>
</feature>
<feature type="domain" description="Kazal-like 6" evidence="9">
    <location>
        <begin position="551"/>
        <end position="603"/>
    </location>
</feature>
<feature type="domain" description="Kazal-like 7" evidence="9">
    <location>
        <begin position="616"/>
        <end position="668"/>
    </location>
</feature>
<feature type="domain" description="Kazal-like 8" evidence="9">
    <location>
        <begin position="700"/>
        <end position="753"/>
    </location>
</feature>
<feature type="domain" description="Laminin EGF-like 1" evidence="8">
    <location>
        <begin position="793"/>
        <end position="846"/>
    </location>
</feature>
<feature type="domain" description="Laminin EGF-like 2" evidence="8">
    <location>
        <begin position="847"/>
        <end position="893"/>
    </location>
</feature>
<feature type="domain" description="Kazal-like 9" evidence="9">
    <location>
        <begin position="917"/>
        <end position="971"/>
    </location>
</feature>
<feature type="domain" description="SEA" evidence="6">
    <location>
        <begin position="1144"/>
        <end position="1266"/>
    </location>
</feature>
<feature type="domain" description="EGF-like 1" evidence="4">
    <location>
        <begin position="1347"/>
        <end position="1383"/>
    </location>
</feature>
<feature type="domain" description="Laminin G-like 1" evidence="5">
    <location>
        <begin position="1388"/>
        <end position="1563"/>
    </location>
</feature>
<feature type="domain" description="EGF-like 2" evidence="4">
    <location>
        <begin position="1564"/>
        <end position="1601"/>
    </location>
</feature>
<feature type="domain" description="EGF-like 3" evidence="4">
    <location>
        <begin position="1603"/>
        <end position="1640"/>
    </location>
</feature>
<feature type="domain" description="Laminin G-like 2" evidence="5">
    <location>
        <begin position="1650"/>
        <end position="1831"/>
    </location>
</feature>
<feature type="domain" description="EGF-like 4" evidence="4">
    <location>
        <begin position="1832"/>
        <end position="1870"/>
    </location>
</feature>
<feature type="domain" description="Laminin G-like 3" evidence="5">
    <location>
        <begin position="1894"/>
        <end position="2078"/>
    </location>
</feature>
<feature type="region of interest" description="Disordered" evidence="10">
    <location>
        <begin position="1066"/>
        <end position="1114"/>
    </location>
</feature>
<feature type="region of interest" description="Disordered" evidence="10">
    <location>
        <begin position="1301"/>
        <end position="1357"/>
    </location>
</feature>
<feature type="compositionally biased region" description="Low complexity" evidence="10">
    <location>
        <begin position="1318"/>
        <end position="1331"/>
    </location>
</feature>
<feature type="binding site" evidence="2">
    <location>
        <position position="1953"/>
    </location>
    <ligand>
        <name>Ca(2+)</name>
        <dbReference type="ChEBI" id="CHEBI:29108"/>
    </ligand>
</feature>
<feature type="binding site" evidence="2">
    <location>
        <position position="1970"/>
    </location>
    <ligand>
        <name>Ca(2+)</name>
        <dbReference type="ChEBI" id="CHEBI:29108"/>
    </ligand>
</feature>
<feature type="binding site" evidence="2">
    <location>
        <position position="2020"/>
    </location>
    <ligand>
        <name>Ca(2+)</name>
        <dbReference type="ChEBI" id="CHEBI:29108"/>
    </ligand>
</feature>
<feature type="binding site" evidence="2">
    <location>
        <position position="2022"/>
    </location>
    <ligand>
        <name>Ca(2+)</name>
        <dbReference type="ChEBI" id="CHEBI:29108"/>
    </ligand>
</feature>
<feature type="site" description="Cleavage; by MMP1">
    <location>
        <begin position="140"/>
        <end position="141"/>
    </location>
</feature>
<feature type="site" description="Cleavage; by MMP7">
    <location>
        <begin position="153"/>
        <end position="154"/>
    </location>
</feature>
<feature type="site" description="Cleavage; by MMP12">
    <location>
        <begin position="161"/>
        <end position="162"/>
    </location>
</feature>
<feature type="site" description="Cleavage, alpha site; by neurotrypsin" evidence="1">
    <location>
        <begin position="1116"/>
        <end position="1117"/>
    </location>
</feature>
<feature type="site" description="Alternative splice site to produce 'A' isoform" evidence="1">
    <location>
        <position position="1765"/>
    </location>
</feature>
<feature type="site" description="Cleavage; by MMP1">
    <location>
        <begin position="1821"/>
        <end position="1822"/>
    </location>
</feature>
<feature type="site" description="Cleavage; by MMP7">
    <location>
        <begin position="1830"/>
        <end position="1831"/>
    </location>
</feature>
<feature type="site" description="Critical for cleavage by neurotrypsin" evidence="1">
    <location>
        <position position="1875"/>
    </location>
</feature>
<feature type="site" description="Cleavage, beta site; by neurotrypsin" evidence="1">
    <location>
        <begin position="1876"/>
        <end position="1877"/>
    </location>
</feature>
<feature type="site" description="Alternative splice site to produce 'B' isoforms" evidence="1">
    <location>
        <position position="1901"/>
    </location>
</feature>
<feature type="site" description="Highly important for the agrin receptor complex activity of the 'B8' insert" evidence="1">
    <location>
        <position position="1905"/>
    </location>
</feature>
<feature type="glycosylation site" description="N-linked (GlcNAc...) asparagine" evidence="3">
    <location>
        <position position="130"/>
    </location>
</feature>
<feature type="glycosylation site" description="N-linked (GlcNAc...) asparagine" evidence="3">
    <location>
        <position position="508"/>
    </location>
</feature>
<feature type="glycosylation site" description="N-linked (GlcNAc...) asparagine" evidence="3">
    <location>
        <position position="777"/>
    </location>
</feature>
<feature type="glycosylation site" description="N-linked (GlcNAc...) asparagine" evidence="3">
    <location>
        <position position="882"/>
    </location>
</feature>
<feature type="glycosylation site" description="N-linked (GlcNAc...) asparagine" evidence="3">
    <location>
        <position position="932"/>
    </location>
</feature>
<feature type="disulfide bond" evidence="7">
    <location>
        <begin position="26"/>
        <end position="98"/>
    </location>
</feature>
<feature type="disulfide bond" description="Or C-147 with C-185">
    <location>
        <begin position="147"/>
        <end position="179"/>
    </location>
</feature>
<feature type="disulfide bond" evidence="9">
    <location>
        <begin position="199"/>
        <end position="230"/>
    </location>
</feature>
<feature type="disulfide bond" evidence="9">
    <location>
        <begin position="204"/>
        <end position="223"/>
    </location>
</feature>
<feature type="disulfide bond" evidence="9">
    <location>
        <begin position="212"/>
        <end position="244"/>
    </location>
</feature>
<feature type="disulfide bond" evidence="9">
    <location>
        <begin position="274"/>
        <end position="305"/>
    </location>
</feature>
<feature type="disulfide bond" evidence="9">
    <location>
        <begin position="278"/>
        <end position="298"/>
    </location>
</feature>
<feature type="disulfide bond" evidence="9">
    <location>
        <begin position="287"/>
        <end position="319"/>
    </location>
</feature>
<feature type="disulfide bond" evidence="9">
    <location>
        <begin position="351"/>
        <end position="370"/>
    </location>
</feature>
<feature type="disulfide bond" evidence="9">
    <location>
        <begin position="359"/>
        <end position="391"/>
    </location>
</feature>
<feature type="disulfide bond" evidence="9">
    <location>
        <begin position="415"/>
        <end position="448"/>
    </location>
</feature>
<feature type="disulfide bond" evidence="9">
    <location>
        <begin position="422"/>
        <end position="441"/>
    </location>
</feature>
<feature type="disulfide bond" evidence="9">
    <location>
        <begin position="430"/>
        <end position="462"/>
    </location>
</feature>
<feature type="disulfide bond" evidence="9">
    <location>
        <begin position="492"/>
        <end position="522"/>
    </location>
</feature>
<feature type="disulfide bond" evidence="9">
    <location>
        <begin position="496"/>
        <end position="515"/>
    </location>
</feature>
<feature type="disulfide bond" evidence="9">
    <location>
        <begin position="504"/>
        <end position="536"/>
    </location>
</feature>
<feature type="disulfide bond" evidence="9">
    <location>
        <begin position="557"/>
        <end position="587"/>
    </location>
</feature>
<feature type="disulfide bond" evidence="9">
    <location>
        <begin position="561"/>
        <end position="580"/>
    </location>
</feature>
<feature type="disulfide bond" evidence="9">
    <location>
        <begin position="569"/>
        <end position="601"/>
    </location>
</feature>
<feature type="disulfide bond" evidence="9">
    <location>
        <begin position="622"/>
        <end position="652"/>
    </location>
</feature>
<feature type="disulfide bond" evidence="9">
    <location>
        <begin position="625"/>
        <end position="645"/>
    </location>
</feature>
<feature type="disulfide bond" evidence="9">
    <location>
        <begin position="634"/>
        <end position="666"/>
    </location>
</feature>
<feature type="disulfide bond" evidence="9">
    <location>
        <begin position="706"/>
        <end position="737"/>
    </location>
</feature>
<feature type="disulfide bond" evidence="9">
    <location>
        <begin position="710"/>
        <end position="730"/>
    </location>
</feature>
<feature type="disulfide bond" evidence="9">
    <location>
        <begin position="719"/>
        <end position="751"/>
    </location>
</feature>
<feature type="disulfide bond" evidence="1">
    <location>
        <begin position="793"/>
        <end position="805"/>
    </location>
</feature>
<feature type="disulfide bond" evidence="1">
    <location>
        <begin position="795"/>
        <end position="812"/>
    </location>
</feature>
<feature type="disulfide bond" evidence="1">
    <location>
        <begin position="814"/>
        <end position="823"/>
    </location>
</feature>
<feature type="disulfide bond" evidence="1">
    <location>
        <begin position="826"/>
        <end position="844"/>
    </location>
</feature>
<feature type="disulfide bond" evidence="1">
    <location>
        <begin position="847"/>
        <end position="859"/>
    </location>
</feature>
<feature type="disulfide bond" evidence="1">
    <location>
        <begin position="849"/>
        <end position="866"/>
    </location>
</feature>
<feature type="disulfide bond" evidence="1">
    <location>
        <begin position="868"/>
        <end position="877"/>
    </location>
</feature>
<feature type="disulfide bond" evidence="1">
    <location>
        <begin position="880"/>
        <end position="891"/>
    </location>
</feature>
<feature type="disulfide bond" evidence="9">
    <location>
        <begin position="923"/>
        <end position="955"/>
    </location>
</feature>
<feature type="disulfide bond" evidence="9">
    <location>
        <begin position="928"/>
        <end position="948"/>
    </location>
</feature>
<feature type="disulfide bond" evidence="9">
    <location>
        <begin position="937"/>
        <end position="969"/>
    </location>
</feature>
<feature type="disulfide bond" evidence="1">
    <location>
        <begin position="1351"/>
        <end position="1362"/>
    </location>
</feature>
<feature type="disulfide bond" evidence="1">
    <location>
        <begin position="1356"/>
        <end position="1371"/>
    </location>
</feature>
<feature type="disulfide bond" evidence="1">
    <location>
        <begin position="1373"/>
        <end position="1382"/>
    </location>
</feature>
<feature type="disulfide bond" evidence="1">
    <location>
        <begin position="1568"/>
        <end position="1579"/>
    </location>
</feature>
<feature type="disulfide bond" evidence="1">
    <location>
        <begin position="1573"/>
        <end position="1589"/>
    </location>
</feature>
<feature type="disulfide bond" evidence="1">
    <location>
        <begin position="1591"/>
        <end position="1600"/>
    </location>
</feature>
<feature type="disulfide bond" evidence="1">
    <location>
        <begin position="1607"/>
        <end position="1618"/>
    </location>
</feature>
<feature type="disulfide bond" evidence="1">
    <location>
        <begin position="1612"/>
        <end position="1628"/>
    </location>
</feature>
<feature type="disulfide bond" evidence="1">
    <location>
        <begin position="1630"/>
        <end position="1639"/>
    </location>
</feature>
<feature type="disulfide bond" evidence="1">
    <location>
        <begin position="1836"/>
        <end position="1849"/>
    </location>
</feature>
<feature type="disulfide bond" evidence="1">
    <location>
        <begin position="1843"/>
        <end position="1858"/>
    </location>
</feature>
<feature type="disulfide bond" evidence="1">
    <location>
        <begin position="1860"/>
        <end position="1869"/>
    </location>
</feature>
<feature type="disulfide bond">
    <location>
        <begin position="2052"/>
        <end position="2078"/>
    </location>
</feature>
<feature type="splice variant" id="VSP_045770" description="In isoform 9." evidence="26">
    <original>MGGSGAAATLALGLALGLALGGWANCPERELQRREEEANVVLTGTVEEIMNVDPVHHTYS</original>
    <variation>MTACQYPMAPGALERDRLYQHKVSLVVRYFMIPCNICLILLATSTLGFAVLLFLNNY</variation>
    <location>
        <begin position="1"/>
        <end position="60"/>
    </location>
</feature>
<feature type="splice variant" id="VSP_045771" description="In isoform 9." evidence="26">
    <location>
        <begin position="61"/>
        <end position="157"/>
    </location>
</feature>
<feature type="splice variant" id="VSP_045772" description="In isoform 10." evidence="27">
    <location>
        <begin position="150"/>
        <end position="156"/>
    </location>
</feature>
<feature type="splice variant" id="VSP_045773" description="In isoform 5, isoform 6, isoform 7 and isoform 8." evidence="25">
    <location>
        <begin position="1766"/>
        <end position="1769"/>
    </location>
</feature>
<feature type="splice variant" id="VSP_045774" description="In isoform 2 and isoform 5." evidence="25">
    <location>
        <begin position="1902"/>
        <end position="1920"/>
    </location>
</feature>
<feature type="splice variant" id="VSP_045775" description="In isoform 4 and isoform 7." evidence="25">
    <location>
        <begin position="1902"/>
        <end position="1909"/>
    </location>
</feature>
<feature type="splice variant" id="VSP_045776" description="In isoform 3 and isoform 6." evidence="25">
    <location>
        <begin position="1910"/>
        <end position="1920"/>
    </location>
</feature>
<feature type="mutagenesis site" description="Abolishes heparan sulfate attachment; when associated with A-675 and A-677." evidence="14">
    <original>S</original>
    <variation>A</variation>
    <location>
        <position position="672"/>
    </location>
</feature>
<feature type="mutagenesis site" description="Abolishes heparan sulfate attachment; when associated with A-672 and A-677." evidence="14">
    <original>S</original>
    <variation>A</variation>
    <location>
        <position position="675"/>
    </location>
</feature>
<feature type="mutagenesis site" description="Abolishes heparan sulfate attachment; when associated with A-672 and A-675." evidence="14">
    <original>S</original>
    <variation>A</variation>
    <location>
        <position position="677"/>
    </location>
</feature>
<feature type="mutagenesis site" description="Abolishes chondroitin sulfate attachment; when associated with A-1079, A-1087 and A-1093." evidence="14">
    <original>S</original>
    <variation>A</variation>
    <location>
        <position position="1073"/>
    </location>
</feature>
<feature type="mutagenesis site" description="Abolishes chondroitin sulfate attachment; when associated with A-1073, A-1087 and A-1093." evidence="14">
    <original>S</original>
    <variation>A</variation>
    <location>
        <position position="1079"/>
    </location>
</feature>
<feature type="mutagenesis site" description="Abolishes chondroitin sulfate attachment; when associated with A-1073, A-10179 and A-1093." evidence="14">
    <original>S</original>
    <variation>A</variation>
    <location>
        <position position="1087"/>
    </location>
</feature>
<feature type="mutagenesis site" description="Abolishes chondroitin sulfate attachment; when associated with A-1073, A-1079 and A-1087." evidence="14">
    <original>S</original>
    <variation>A</variation>
    <location>
        <position position="1093"/>
    </location>
</feature>
<feature type="mutagenesis site" description="No reduction in AGRN-induced MUSK phosphorylation." evidence="18">
    <original>HLSNEIP</original>
    <variation>AAANEIA</variation>
    <location>
        <begin position="1902"/>
        <end position="1908"/>
    </location>
</feature>
<feature type="mutagenesis site" description="Large reduction in AGRN-induced MUSK phosphorylation." evidence="18">
    <original>NEI</original>
    <variation>AAA</variation>
    <variation>AES</variation>
    <location>
        <begin position="1905"/>
        <end position="1907"/>
    </location>
</feature>
<feature type="mutagenesis site" description="Some reduction in AGRN-induced MUSK phosphorylation.">
    <original>NE</original>
    <variation>AA</variation>
    <location>
        <begin position="1905"/>
        <end position="1906"/>
    </location>
</feature>
<feature type="mutagenesis site" description="No effect on AGRN-induced MUSK phosphorylation." evidence="18">
    <original>N</original>
    <variation>A</variation>
    <location>
        <position position="1905"/>
    </location>
</feature>
<feature type="mutagenesis site" description="No effect on AGRN-induced MUSK phosphorylation." evidence="18">
    <original>E</original>
    <variation>A</variation>
    <location>
        <position position="1906"/>
    </location>
</feature>
<feature type="mutagenesis site" description="No effect on AGRN-induced MUSK phosphorylation." evidence="18">
    <original>I</original>
    <variation>A</variation>
    <location>
        <position position="1907"/>
    </location>
</feature>
<feature type="sequence conflict" description="In Ref. 3; AAA48586." evidence="27" ref="3">
    <original>RTI</original>
    <variation>SIL</variation>
    <location>
        <begin position="1247"/>
        <end position="1249"/>
    </location>
</feature>
<feature type="helix" evidence="28">
    <location>
        <begin position="31"/>
        <end position="36"/>
    </location>
</feature>
<feature type="strand" evidence="28">
    <location>
        <begin position="39"/>
        <end position="53"/>
    </location>
</feature>
<feature type="turn" evidence="28">
    <location>
        <begin position="54"/>
        <end position="57"/>
    </location>
</feature>
<feature type="strand" evidence="28">
    <location>
        <begin position="58"/>
        <end position="70"/>
    </location>
</feature>
<feature type="helix" evidence="28">
    <location>
        <begin position="72"/>
        <end position="78"/>
    </location>
</feature>
<feature type="turn" evidence="28">
    <location>
        <begin position="83"/>
        <end position="85"/>
    </location>
</feature>
<feature type="strand" evidence="28">
    <location>
        <begin position="86"/>
        <end position="92"/>
    </location>
</feature>
<feature type="strand" evidence="29">
    <location>
        <begin position="97"/>
        <end position="99"/>
    </location>
</feature>
<feature type="strand" evidence="28">
    <location>
        <begin position="107"/>
        <end position="114"/>
    </location>
</feature>
<feature type="helix" evidence="28">
    <location>
        <begin position="117"/>
        <end position="119"/>
    </location>
</feature>
<feature type="turn" evidence="28">
    <location>
        <begin position="120"/>
        <end position="125"/>
    </location>
</feature>
<feature type="strand" evidence="28">
    <location>
        <begin position="126"/>
        <end position="129"/>
    </location>
</feature>
<feature type="helix" evidence="28">
    <location>
        <begin position="138"/>
        <end position="152"/>
    </location>
</feature>
<feature type="strand" evidence="30">
    <location>
        <begin position="1879"/>
        <end position="1881"/>
    </location>
</feature>
<feature type="strand" evidence="30">
    <location>
        <begin position="1884"/>
        <end position="1889"/>
    </location>
</feature>
<feature type="strand" evidence="30">
    <location>
        <begin position="1892"/>
        <end position="1895"/>
    </location>
</feature>
<feature type="strand" evidence="30">
    <location>
        <begin position="1922"/>
        <end position="1935"/>
    </location>
</feature>
<feature type="strand" evidence="30">
    <location>
        <begin position="1938"/>
        <end position="1946"/>
    </location>
</feature>
<feature type="strand" evidence="30">
    <location>
        <begin position="1954"/>
        <end position="1960"/>
    </location>
</feature>
<feature type="strand" evidence="30">
    <location>
        <begin position="1963"/>
        <end position="1972"/>
    </location>
</feature>
<feature type="strand" evidence="30">
    <location>
        <begin position="1975"/>
        <end position="1982"/>
    </location>
</feature>
<feature type="strand" evidence="30">
    <location>
        <begin position="1985"/>
        <end position="1987"/>
    </location>
</feature>
<feature type="strand" evidence="30">
    <location>
        <begin position="1989"/>
        <end position="1996"/>
    </location>
</feature>
<feature type="strand" evidence="30">
    <location>
        <begin position="1999"/>
        <end position="2004"/>
    </location>
</feature>
<feature type="strand" evidence="30">
    <location>
        <begin position="2010"/>
        <end position="2013"/>
    </location>
</feature>
<feature type="strand" evidence="30">
    <location>
        <begin position="2021"/>
        <end position="2023"/>
    </location>
</feature>
<feature type="strand" evidence="30">
    <location>
        <begin position="2026"/>
        <end position="2031"/>
    </location>
</feature>
<feature type="turn" evidence="30">
    <location>
        <begin position="2037"/>
        <end position="2040"/>
    </location>
</feature>
<feature type="helix" evidence="30">
    <location>
        <begin position="2043"/>
        <end position="2046"/>
    </location>
</feature>
<feature type="strand" evidence="30">
    <location>
        <begin position="2050"/>
        <end position="2058"/>
    </location>
</feature>
<feature type="turn" evidence="30">
    <location>
        <begin position="2065"/>
        <end position="2067"/>
    </location>
</feature>
<dbReference type="EMBL" id="U35613">
    <property type="protein sequence ID" value="AAC59740.1"/>
    <property type="molecule type" value="mRNA"/>
</dbReference>
<dbReference type="EMBL" id="M94271">
    <property type="protein sequence ID" value="AAA48585.1"/>
    <property type="status" value="ALT_FRAME"/>
    <property type="molecule type" value="mRNA"/>
</dbReference>
<dbReference type="EMBL" id="M97371">
    <property type="protein sequence ID" value="AAA48586.1"/>
    <property type="molecule type" value="mRNA"/>
</dbReference>
<dbReference type="EMBL" id="M97372">
    <property type="status" value="NOT_ANNOTATED_CDS"/>
    <property type="molecule type" value="mRNA"/>
</dbReference>
<dbReference type="EMBL" id="U07271">
    <property type="protein sequence ID" value="AAA16788.1"/>
    <property type="molecule type" value="mRNA"/>
</dbReference>
<dbReference type="PIR" id="JH0591">
    <property type="entry name" value="AGCH"/>
</dbReference>
<dbReference type="PDB" id="1JB3">
    <property type="method" value="X-ray"/>
    <property type="resolution" value="1.60 A"/>
    <property type="chains" value="A=26-156"/>
</dbReference>
<dbReference type="PDB" id="1JC7">
    <property type="method" value="X-ray"/>
    <property type="resolution" value="2.73 A"/>
    <property type="chains" value="A=26-154"/>
</dbReference>
<dbReference type="PDB" id="1PXU">
    <property type="method" value="X-ray"/>
    <property type="resolution" value="2.20 A"/>
    <property type="chains" value="A=25-155"/>
</dbReference>
<dbReference type="PDB" id="1PZ7">
    <property type="method" value="X-ray"/>
    <property type="resolution" value="1.42 A"/>
    <property type="chains" value="A/B=1870-2081"/>
</dbReference>
<dbReference type="PDB" id="1PZ8">
    <property type="method" value="X-ray"/>
    <property type="resolution" value="2.35 A"/>
    <property type="chains" value="A/B/C/D=1870-2081"/>
</dbReference>
<dbReference type="PDB" id="1PZ9">
    <property type="method" value="X-ray"/>
    <property type="resolution" value="2.80 A"/>
    <property type="chains" value="A/B=1870-2081"/>
</dbReference>
<dbReference type="PDB" id="1Q56">
    <property type="method" value="NMR"/>
    <property type="chains" value="A=1870-2081"/>
</dbReference>
<dbReference type="PDB" id="3I70">
    <property type="method" value="X-ray"/>
    <property type="resolution" value="2.30 A"/>
    <property type="chains" value="A=26-153"/>
</dbReference>
<dbReference type="PDBsum" id="1JB3"/>
<dbReference type="PDBsum" id="1JC7"/>
<dbReference type="PDBsum" id="1PXU"/>
<dbReference type="PDBsum" id="1PZ7"/>
<dbReference type="PDBsum" id="1PZ8"/>
<dbReference type="PDBsum" id="1PZ9"/>
<dbReference type="PDBsum" id="1Q56"/>
<dbReference type="PDBsum" id="3I70"/>
<dbReference type="SMR" id="P31696"/>
<dbReference type="BioGRID" id="676782">
    <property type="interactions" value="2"/>
</dbReference>
<dbReference type="FunCoup" id="P31696">
    <property type="interactions" value="319"/>
</dbReference>
<dbReference type="IntAct" id="P31696">
    <property type="interactions" value="5"/>
</dbReference>
<dbReference type="STRING" id="9031.ENSGALP00000059759"/>
<dbReference type="GlyCosmos" id="P31696">
    <property type="glycosylation" value="5 sites, No reported glycans"/>
</dbReference>
<dbReference type="GlyGen" id="P31696">
    <property type="glycosylation" value="8 sites"/>
</dbReference>
<dbReference type="PaxDb" id="9031-ENSGALP00000039379"/>
<dbReference type="VEuPathDB" id="HostDB:geneid_396538"/>
<dbReference type="eggNOG" id="KOG3509">
    <property type="taxonomic scope" value="Eukaryota"/>
</dbReference>
<dbReference type="InParanoid" id="P31696"/>
<dbReference type="OrthoDB" id="5983569at2759"/>
<dbReference type="EvolutionaryTrace" id="P31696"/>
<dbReference type="Proteomes" id="UP000000539">
    <property type="component" value="Unassembled WGS sequence"/>
</dbReference>
<dbReference type="GO" id="GO:0030424">
    <property type="term" value="C:axon"/>
    <property type="evidence" value="ECO:0000314"/>
    <property type="project" value="AgBase"/>
</dbReference>
<dbReference type="GO" id="GO:0045178">
    <property type="term" value="C:basal part of cell"/>
    <property type="evidence" value="ECO:0000314"/>
    <property type="project" value="AgBase"/>
</dbReference>
<dbReference type="GO" id="GO:0005604">
    <property type="term" value="C:basement membrane"/>
    <property type="evidence" value="ECO:0000314"/>
    <property type="project" value="AgBase"/>
</dbReference>
<dbReference type="GO" id="GO:0031012">
    <property type="term" value="C:extracellular matrix"/>
    <property type="evidence" value="ECO:0000304"/>
    <property type="project" value="AgBase"/>
</dbReference>
<dbReference type="GO" id="GO:0098965">
    <property type="term" value="C:extracellular matrix of synaptic cleft"/>
    <property type="evidence" value="ECO:0000314"/>
    <property type="project" value="SynGO"/>
</dbReference>
<dbReference type="GO" id="GO:0005576">
    <property type="term" value="C:extracellular region"/>
    <property type="evidence" value="ECO:0000315"/>
    <property type="project" value="AgBase"/>
</dbReference>
<dbReference type="GO" id="GO:0005615">
    <property type="term" value="C:extracellular space"/>
    <property type="evidence" value="ECO:0000314"/>
    <property type="project" value="AgBase"/>
</dbReference>
<dbReference type="GO" id="GO:0098978">
    <property type="term" value="C:glutamatergic synapse"/>
    <property type="evidence" value="ECO:0000314"/>
    <property type="project" value="SynGO"/>
</dbReference>
<dbReference type="GO" id="GO:0045121">
    <property type="term" value="C:membrane raft"/>
    <property type="evidence" value="ECO:0000314"/>
    <property type="project" value="AgBase"/>
</dbReference>
<dbReference type="GO" id="GO:0031594">
    <property type="term" value="C:neuromuscular junction"/>
    <property type="evidence" value="ECO:0000314"/>
    <property type="project" value="AgBase"/>
</dbReference>
<dbReference type="GO" id="GO:0098684">
    <property type="term" value="C:photoreceptor ribbon synapse"/>
    <property type="evidence" value="ECO:0000314"/>
    <property type="project" value="SynGO"/>
</dbReference>
<dbReference type="GO" id="GO:0005886">
    <property type="term" value="C:plasma membrane"/>
    <property type="evidence" value="ECO:0000314"/>
    <property type="project" value="AgBase"/>
</dbReference>
<dbReference type="GO" id="GO:0045202">
    <property type="term" value="C:synapse"/>
    <property type="evidence" value="ECO:0000314"/>
    <property type="project" value="AgBase"/>
</dbReference>
<dbReference type="GO" id="GO:0030548">
    <property type="term" value="F:acetylcholine receptor regulator activity"/>
    <property type="evidence" value="ECO:0000314"/>
    <property type="project" value="UniProtKB"/>
</dbReference>
<dbReference type="GO" id="GO:0005509">
    <property type="term" value="F:calcium ion binding"/>
    <property type="evidence" value="ECO:0000314"/>
    <property type="project" value="UniProtKB"/>
</dbReference>
<dbReference type="GO" id="GO:0035374">
    <property type="term" value="F:chondroitin sulfate binding"/>
    <property type="evidence" value="ECO:0000314"/>
    <property type="project" value="UniProtKB"/>
</dbReference>
<dbReference type="GO" id="GO:0002162">
    <property type="term" value="F:dystroglycan binding"/>
    <property type="evidence" value="ECO:0000314"/>
    <property type="project" value="UniProtKB"/>
</dbReference>
<dbReference type="GO" id="GO:0050840">
    <property type="term" value="F:extracellular matrix binding"/>
    <property type="evidence" value="ECO:0000315"/>
    <property type="project" value="AgBase"/>
</dbReference>
<dbReference type="GO" id="GO:0005539">
    <property type="term" value="F:glycosaminoglycan binding"/>
    <property type="evidence" value="ECO:0000315"/>
    <property type="project" value="AgBase"/>
</dbReference>
<dbReference type="GO" id="GO:0043395">
    <property type="term" value="F:heparan sulfate proteoglycan binding"/>
    <property type="evidence" value="ECO:0000314"/>
    <property type="project" value="UniProtKB"/>
</dbReference>
<dbReference type="GO" id="GO:0008201">
    <property type="term" value="F:heparin binding"/>
    <property type="evidence" value="ECO:0000314"/>
    <property type="project" value="UniProtKB"/>
</dbReference>
<dbReference type="GO" id="GO:0043236">
    <property type="term" value="F:laminin binding"/>
    <property type="evidence" value="ECO:0000314"/>
    <property type="project" value="UniProtKB"/>
</dbReference>
<dbReference type="GO" id="GO:0043237">
    <property type="term" value="F:laminin-1 binding"/>
    <property type="evidence" value="ECO:0000314"/>
    <property type="project" value="AgBase"/>
</dbReference>
<dbReference type="GO" id="GO:0033691">
    <property type="term" value="F:sialic acid binding"/>
    <property type="evidence" value="ECO:0000314"/>
    <property type="project" value="UniProtKB"/>
</dbReference>
<dbReference type="GO" id="GO:0038023">
    <property type="term" value="F:signaling receptor activity"/>
    <property type="evidence" value="ECO:0000304"/>
    <property type="project" value="AgBase"/>
</dbReference>
<dbReference type="GO" id="GO:0030297">
    <property type="term" value="F:transmembrane receptor protein tyrosine kinase activator activity"/>
    <property type="evidence" value="ECO:0000314"/>
    <property type="project" value="UniProtKB"/>
</dbReference>
<dbReference type="GO" id="GO:0030036">
    <property type="term" value="P:actin cytoskeleton organization"/>
    <property type="evidence" value="ECO:0000304"/>
    <property type="project" value="AgBase"/>
</dbReference>
<dbReference type="GO" id="GO:0007420">
    <property type="term" value="P:brain development"/>
    <property type="evidence" value="ECO:0000315"/>
    <property type="project" value="AgBase"/>
</dbReference>
<dbReference type="GO" id="GO:0030154">
    <property type="term" value="P:cell differentiation"/>
    <property type="evidence" value="ECO:0007669"/>
    <property type="project" value="UniProtKB-KW"/>
</dbReference>
<dbReference type="GO" id="GO:0046847">
    <property type="term" value="P:filopodium assembly"/>
    <property type="evidence" value="ECO:0000314"/>
    <property type="project" value="AgBase"/>
</dbReference>
<dbReference type="GO" id="GO:0010977">
    <property type="term" value="P:negative regulation of neuron projection development"/>
    <property type="evidence" value="ECO:0000314"/>
    <property type="project" value="AgBase"/>
</dbReference>
<dbReference type="GO" id="GO:0007399">
    <property type="term" value="P:nervous system development"/>
    <property type="evidence" value="ECO:0000314"/>
    <property type="project" value="AgBase"/>
</dbReference>
<dbReference type="GO" id="GO:0007528">
    <property type="term" value="P:neuromuscular junction development"/>
    <property type="evidence" value="ECO:0000318"/>
    <property type="project" value="GO_Central"/>
</dbReference>
<dbReference type="GO" id="GO:0007158">
    <property type="term" value="P:neuron cell-cell adhesion"/>
    <property type="evidence" value="ECO:0000304"/>
    <property type="project" value="AgBase"/>
</dbReference>
<dbReference type="GO" id="GO:0051491">
    <property type="term" value="P:positive regulation of filopodium assembly"/>
    <property type="evidence" value="ECO:0000250"/>
    <property type="project" value="UniProtKB"/>
</dbReference>
<dbReference type="GO" id="GO:0043547">
    <property type="term" value="P:positive regulation of GTPase activity"/>
    <property type="evidence" value="ECO:0000250"/>
    <property type="project" value="UniProtKB"/>
</dbReference>
<dbReference type="GO" id="GO:0045887">
    <property type="term" value="P:positive regulation of synaptic assembly at neuromuscular junction"/>
    <property type="evidence" value="ECO:0000250"/>
    <property type="project" value="UniProtKB"/>
</dbReference>
<dbReference type="GO" id="GO:0045944">
    <property type="term" value="P:positive regulation of transcription by RNA polymerase II"/>
    <property type="evidence" value="ECO:0000250"/>
    <property type="project" value="UniProtKB"/>
</dbReference>
<dbReference type="GO" id="GO:0043113">
    <property type="term" value="P:receptor clustering"/>
    <property type="evidence" value="ECO:0000314"/>
    <property type="project" value="UniProtKB"/>
</dbReference>
<dbReference type="GO" id="GO:0071340">
    <property type="term" value="P:skeletal muscle acetylcholine-gated channel clustering"/>
    <property type="evidence" value="ECO:0000314"/>
    <property type="project" value="AgBase"/>
</dbReference>
<dbReference type="CDD" id="cd00054">
    <property type="entry name" value="EGF_CA"/>
    <property type="match status" value="2"/>
</dbReference>
<dbReference type="CDD" id="cd00055">
    <property type="entry name" value="EGF_Lam"/>
    <property type="match status" value="2"/>
</dbReference>
<dbReference type="CDD" id="cd00104">
    <property type="entry name" value="KAZAL_FS"/>
    <property type="match status" value="9"/>
</dbReference>
<dbReference type="CDD" id="cd00110">
    <property type="entry name" value="LamG"/>
    <property type="match status" value="3"/>
</dbReference>
<dbReference type="FunFam" id="2.10.25.10:FF:000646">
    <property type="entry name" value="Agrin"/>
    <property type="match status" value="1"/>
</dbReference>
<dbReference type="FunFam" id="2.10.25.10:FF:000770">
    <property type="entry name" value="Agrin"/>
    <property type="match status" value="1"/>
</dbReference>
<dbReference type="FunFam" id="3.30.60.30:FF:000013">
    <property type="entry name" value="Agrin"/>
    <property type="match status" value="1"/>
</dbReference>
<dbReference type="FunFam" id="3.30.60.30:FF:000016">
    <property type="entry name" value="Agrin"/>
    <property type="match status" value="1"/>
</dbReference>
<dbReference type="FunFam" id="3.30.60.30:FF:000075">
    <property type="entry name" value="Agrin"/>
    <property type="match status" value="1"/>
</dbReference>
<dbReference type="FunFam" id="3.30.60.30:FF:000039">
    <property type="entry name" value="Agrin isoform B"/>
    <property type="match status" value="1"/>
</dbReference>
<dbReference type="FunFam" id="2.40.50.120:FF:000008">
    <property type="entry name" value="agrin isoform X1"/>
    <property type="match status" value="1"/>
</dbReference>
<dbReference type="FunFam" id="3.30.60.30:FF:000041">
    <property type="entry name" value="agrin isoform X5"/>
    <property type="match status" value="1"/>
</dbReference>
<dbReference type="FunFam" id="2.10.25.10:FF:000095">
    <property type="entry name" value="Notch, isoform B"/>
    <property type="match status" value="1"/>
</dbReference>
<dbReference type="FunFam" id="2.60.120.200:FF:000031">
    <property type="entry name" value="NtA agrin"/>
    <property type="match status" value="1"/>
</dbReference>
<dbReference type="FunFam" id="3.30.60.30:FF:000019">
    <property type="entry name" value="NtA agrin"/>
    <property type="match status" value="1"/>
</dbReference>
<dbReference type="FunFam" id="3.30.70.960:FF:000001">
    <property type="entry name" value="NtA agrin"/>
    <property type="match status" value="1"/>
</dbReference>
<dbReference type="FunFam" id="2.10.25.10:FF:000134">
    <property type="entry name" value="Transmembrane agrin"/>
    <property type="match status" value="1"/>
</dbReference>
<dbReference type="FunFam" id="2.10.25.10:FF:000140">
    <property type="entry name" value="Transmembrane agrin"/>
    <property type="match status" value="1"/>
</dbReference>
<dbReference type="FunFam" id="2.60.120.200:FF:000027">
    <property type="entry name" value="Transmembrane agrin"/>
    <property type="match status" value="1"/>
</dbReference>
<dbReference type="FunFam" id="2.60.120.200:FF:000045">
    <property type="entry name" value="Transmembrane agrin"/>
    <property type="match status" value="1"/>
</dbReference>
<dbReference type="FunFam" id="3.30.60.30:FF:000008">
    <property type="entry name" value="Transmembrane agrin"/>
    <property type="match status" value="1"/>
</dbReference>
<dbReference type="FunFam" id="3.30.60.30:FF:000015">
    <property type="entry name" value="Transmembrane agrin"/>
    <property type="match status" value="1"/>
</dbReference>
<dbReference type="FunFam" id="3.30.60.30:FF:000022">
    <property type="entry name" value="Transmembrane agrin"/>
    <property type="match status" value="1"/>
</dbReference>
<dbReference type="Gene3D" id="2.40.50.120">
    <property type="match status" value="1"/>
</dbReference>
<dbReference type="Gene3D" id="2.60.120.200">
    <property type="match status" value="3"/>
</dbReference>
<dbReference type="Gene3D" id="3.30.60.30">
    <property type="match status" value="9"/>
</dbReference>
<dbReference type="Gene3D" id="2.10.25.10">
    <property type="entry name" value="Laminin"/>
    <property type="match status" value="6"/>
</dbReference>
<dbReference type="Gene3D" id="3.30.70.960">
    <property type="entry name" value="SEA domain"/>
    <property type="match status" value="1"/>
</dbReference>
<dbReference type="InterPro" id="IPR013320">
    <property type="entry name" value="ConA-like_dom_sf"/>
</dbReference>
<dbReference type="InterPro" id="IPR001881">
    <property type="entry name" value="EGF-like_Ca-bd_dom"/>
</dbReference>
<dbReference type="InterPro" id="IPR000742">
    <property type="entry name" value="EGF-like_dom"/>
</dbReference>
<dbReference type="InterPro" id="IPR000152">
    <property type="entry name" value="EGF-type_Asp/Asn_hydroxyl_site"/>
</dbReference>
<dbReference type="InterPro" id="IPR003884">
    <property type="entry name" value="FacI_MAC"/>
</dbReference>
<dbReference type="InterPro" id="IPR003645">
    <property type="entry name" value="Fol_N"/>
</dbReference>
<dbReference type="InterPro" id="IPR002350">
    <property type="entry name" value="Kazal_dom"/>
</dbReference>
<dbReference type="InterPro" id="IPR036058">
    <property type="entry name" value="Kazal_dom_sf"/>
</dbReference>
<dbReference type="InterPro" id="IPR001791">
    <property type="entry name" value="Laminin_G"/>
</dbReference>
<dbReference type="InterPro" id="IPR002049">
    <property type="entry name" value="LE_dom"/>
</dbReference>
<dbReference type="InterPro" id="IPR050372">
    <property type="entry name" value="Neurexin-related_CASP"/>
</dbReference>
<dbReference type="InterPro" id="IPR004850">
    <property type="entry name" value="NtA_dom"/>
</dbReference>
<dbReference type="InterPro" id="IPR000082">
    <property type="entry name" value="SEA_dom"/>
</dbReference>
<dbReference type="InterPro" id="IPR036364">
    <property type="entry name" value="SEA_dom_sf"/>
</dbReference>
<dbReference type="InterPro" id="IPR008993">
    <property type="entry name" value="TIMP-like_OB-fold"/>
</dbReference>
<dbReference type="PANTHER" id="PTHR15036:SF83">
    <property type="entry name" value="AGRIN"/>
    <property type="match status" value="1"/>
</dbReference>
<dbReference type="PANTHER" id="PTHR15036">
    <property type="entry name" value="PIKACHURIN-LIKE PROTEIN"/>
    <property type="match status" value="1"/>
</dbReference>
<dbReference type="Pfam" id="PF00008">
    <property type="entry name" value="EGF"/>
    <property type="match status" value="4"/>
</dbReference>
<dbReference type="Pfam" id="PF00053">
    <property type="entry name" value="EGF_laminin"/>
    <property type="match status" value="2"/>
</dbReference>
<dbReference type="Pfam" id="PF00050">
    <property type="entry name" value="Kazal_1"/>
    <property type="match status" value="1"/>
</dbReference>
<dbReference type="Pfam" id="PF07648">
    <property type="entry name" value="Kazal_2"/>
    <property type="match status" value="8"/>
</dbReference>
<dbReference type="Pfam" id="PF00054">
    <property type="entry name" value="Laminin_G_1"/>
    <property type="match status" value="3"/>
</dbReference>
<dbReference type="Pfam" id="PF03146">
    <property type="entry name" value="NtA"/>
    <property type="match status" value="1"/>
</dbReference>
<dbReference type="Pfam" id="PF01390">
    <property type="entry name" value="SEA"/>
    <property type="match status" value="1"/>
</dbReference>
<dbReference type="PRINTS" id="PR00011">
    <property type="entry name" value="EGFLAMININ"/>
</dbReference>
<dbReference type="SMART" id="SM00181">
    <property type="entry name" value="EGF"/>
    <property type="match status" value="8"/>
</dbReference>
<dbReference type="SMART" id="SM00179">
    <property type="entry name" value="EGF_CA"/>
    <property type="match status" value="3"/>
</dbReference>
<dbReference type="SMART" id="SM00180">
    <property type="entry name" value="EGF_Lam"/>
    <property type="match status" value="2"/>
</dbReference>
<dbReference type="SMART" id="SM00057">
    <property type="entry name" value="FIMAC"/>
    <property type="match status" value="2"/>
</dbReference>
<dbReference type="SMART" id="SM00274">
    <property type="entry name" value="FOLN"/>
    <property type="match status" value="6"/>
</dbReference>
<dbReference type="SMART" id="SM00280">
    <property type="entry name" value="KAZAL"/>
    <property type="match status" value="9"/>
</dbReference>
<dbReference type="SMART" id="SM00282">
    <property type="entry name" value="LamG"/>
    <property type="match status" value="3"/>
</dbReference>
<dbReference type="SMART" id="SM00200">
    <property type="entry name" value="SEA"/>
    <property type="match status" value="1"/>
</dbReference>
<dbReference type="SUPFAM" id="SSF49899">
    <property type="entry name" value="Concanavalin A-like lectins/glucanases"/>
    <property type="match status" value="3"/>
</dbReference>
<dbReference type="SUPFAM" id="SSF57196">
    <property type="entry name" value="EGF/Laminin"/>
    <property type="match status" value="3"/>
</dbReference>
<dbReference type="SUPFAM" id="SSF100895">
    <property type="entry name" value="Kazal-type serine protease inhibitors"/>
    <property type="match status" value="9"/>
</dbReference>
<dbReference type="SUPFAM" id="SSF82671">
    <property type="entry name" value="SEA domain"/>
    <property type="match status" value="1"/>
</dbReference>
<dbReference type="SUPFAM" id="SSF50242">
    <property type="entry name" value="TIMP-like"/>
    <property type="match status" value="1"/>
</dbReference>
<dbReference type="PROSITE" id="PS00010">
    <property type="entry name" value="ASX_HYDROXYL"/>
    <property type="match status" value="1"/>
</dbReference>
<dbReference type="PROSITE" id="PS00022">
    <property type="entry name" value="EGF_1"/>
    <property type="match status" value="6"/>
</dbReference>
<dbReference type="PROSITE" id="PS01186">
    <property type="entry name" value="EGF_2"/>
    <property type="match status" value="1"/>
</dbReference>
<dbReference type="PROSITE" id="PS50026">
    <property type="entry name" value="EGF_3"/>
    <property type="match status" value="4"/>
</dbReference>
<dbReference type="PROSITE" id="PS01248">
    <property type="entry name" value="EGF_LAM_1"/>
    <property type="match status" value="1"/>
</dbReference>
<dbReference type="PROSITE" id="PS50027">
    <property type="entry name" value="EGF_LAM_2"/>
    <property type="match status" value="2"/>
</dbReference>
<dbReference type="PROSITE" id="PS51465">
    <property type="entry name" value="KAZAL_2"/>
    <property type="match status" value="9"/>
</dbReference>
<dbReference type="PROSITE" id="PS50025">
    <property type="entry name" value="LAM_G_DOMAIN"/>
    <property type="match status" value="3"/>
</dbReference>
<dbReference type="PROSITE" id="PS51121">
    <property type="entry name" value="NTA"/>
    <property type="match status" value="1"/>
</dbReference>
<dbReference type="PROSITE" id="PS50024">
    <property type="entry name" value="SEA"/>
    <property type="match status" value="1"/>
</dbReference>
<gene>
    <name type="primary">AGRN</name>
    <name type="synonym">AGRIN</name>
</gene>
<organism>
    <name type="scientific">Gallus gallus</name>
    <name type="common">Chicken</name>
    <dbReference type="NCBI Taxonomy" id="9031"/>
    <lineage>
        <taxon>Eukaryota</taxon>
        <taxon>Metazoa</taxon>
        <taxon>Chordata</taxon>
        <taxon>Craniata</taxon>
        <taxon>Vertebrata</taxon>
        <taxon>Euteleostomi</taxon>
        <taxon>Archelosauria</taxon>
        <taxon>Archosauria</taxon>
        <taxon>Dinosauria</taxon>
        <taxon>Saurischia</taxon>
        <taxon>Theropoda</taxon>
        <taxon>Coelurosauria</taxon>
        <taxon>Aves</taxon>
        <taxon>Neognathae</taxon>
        <taxon>Galloanserae</taxon>
        <taxon>Galliformes</taxon>
        <taxon>Phasianidae</taxon>
        <taxon>Phasianinae</taxon>
        <taxon>Gallus</taxon>
    </lineage>
</organism>
<accession>P31696</accession>
<accession>Q90609</accession>
<accession>Q90685</accession>
<protein>
    <recommendedName>
        <fullName>Agrin</fullName>
    </recommendedName>
    <component>
        <recommendedName>
            <fullName>Agrin N-terminal 110 kDa subunit</fullName>
        </recommendedName>
    </component>
    <component>
        <recommendedName>
            <fullName>Agrin C-terminal 110 kDa subunit</fullName>
        </recommendedName>
    </component>
    <component>
        <recommendedName>
            <fullName>Agrin C-terminal 90 kDa fragment</fullName>
            <shortName>C90</shortName>
        </recommendedName>
    </component>
    <component>
        <recommendedName>
            <fullName>Agrin C-terminal 22 kDa fragment</fullName>
            <shortName>C22</shortName>
        </recommendedName>
    </component>
</protein>
<reference key="1">
    <citation type="journal article" date="1995" name="J. Cell Biol.">
        <title>Acetylcholine receptor-aggregating activity of agrin isoforms and mapping of the active site.</title>
        <authorList>
            <person name="Gesemann M."/>
            <person name="Denzer A.J."/>
            <person name="Ruegg M.A."/>
        </authorList>
    </citation>
    <scope>NUCLEOTIDE SEQUENCE [MRNA] (ISOFORMS 1; 2; 3; 4 AND 5)</scope>
    <scope>FUNCTION</scope>
</reference>
<reference key="2">
    <citation type="journal article" date="1995" name="J. Cell Biol.">
        <title>An amino-terminal extension is required for the secretion of chick agrin and its binding to extracellular matrix.</title>
        <authorList>
            <person name="Denzer A.J."/>
            <person name="Gesemann M."/>
            <person name="Schumacher B."/>
            <person name="Rueegg M.A."/>
        </authorList>
    </citation>
    <scope>NUCLEOTIDE SEQUENCE [MRNA] OF 1-221 (ISOFORMS 1 AND 9)</scope>
    <scope>GLYCOSYLATION</scope>
    <scope>INTERACTION WITH LAMININ</scope>
    <scope>TISSUE SPECIFICITY</scope>
    <scope>SUBCELLULAR LOCATION</scope>
    <source>
        <tissue>Spinal cord</tissue>
    </source>
</reference>
<reference key="3">
    <citation type="journal article" date="1992" name="Neuron">
        <title>cDNA that encodes active agrin.</title>
        <authorList>
            <person name="Tsim K.W.K."/>
            <person name="Rueegg M.A."/>
            <person name="Escher G."/>
            <person name="Kroeger S."/>
            <person name="McMahan U.J."/>
        </authorList>
    </citation>
    <scope>NUCLEOTIDE SEQUENCE [MRNA] OF 94-2073 (ISOFORM 1)</scope>
    <source>
        <tissue>Brain</tissue>
    </source>
</reference>
<reference key="4">
    <citation type="journal article" date="1993" name="Dev. Biol.">
        <title>Developmental expression and alternative splicing of chick agrin RNA.</title>
        <authorList>
            <person name="Thomas W.S."/>
            <person name="O'Dowd D.K."/>
            <person name="Smith M.A."/>
        </authorList>
    </citation>
    <scope>NUCLEOTIDE SEQUENCE [MRNA] OF 1901-1921 (ISOFORM 1)</scope>
    <source>
        <strain>White leghorn</strain>
    </source>
</reference>
<reference key="5">
    <citation type="journal article" date="1992" name="Neuron">
        <title>The agrin gene codes for a family of basal lamina proteins that differ in function and distribution.</title>
        <authorList>
            <person name="Rueegg M.A."/>
            <person name="Tsim K.W.K."/>
            <person name="Horton S.E."/>
            <person name="Kroeger S."/>
            <person name="Escher G."/>
            <person name="Gensch E.M."/>
            <person name="McMahan U.J."/>
        </authorList>
    </citation>
    <scope>ALTERNATIVE SPLICING</scope>
</reference>
<reference key="6">
    <citation type="journal article" date="1996" name="Neuron">
        <title>Alternative splicing of agrin alters its binding to heparin, dystroglycan, and the putative agrin receptor.</title>
        <authorList>
            <person name="Gesemann M."/>
            <person name="Cavalli V."/>
            <person name="Denzer A.J."/>
            <person name="Brancaccio A."/>
            <person name="Schumacher B."/>
            <person name="Ruegg M.A."/>
        </authorList>
    </citation>
    <scope>ALTERNATIVE SPLICING</scope>
    <scope>INTERACTION WITH DAG1</scope>
    <scope>HEPARIN BINDING</scope>
</reference>
<reference key="7">
    <citation type="journal article" date="1997" name="J. Cell Biol.">
        <title>Agrin binds to the nerve-muscle basal lamina via laminin.</title>
        <authorList>
            <person name="Denzer A.J."/>
            <person name="Brandenberger R."/>
            <person name="Gesemann M."/>
            <person name="Chiquet M."/>
            <person name="Ruegg M.A."/>
        </authorList>
    </citation>
    <scope>LAMININ BINDING</scope>
</reference>
<reference key="8">
    <citation type="journal article" date="2001" name="J. Cell Biol.">
        <title>Effects of purified recombinant neural and muscle agrin on skeletal muscle fibers in vivo.</title>
        <authorList>
            <person name="Bezakova G."/>
            <person name="Helm J.P."/>
            <person name="Francolini M."/>
            <person name="Lomo T."/>
        </authorList>
    </citation>
    <scope>FUNCTION</scope>
</reference>
<reference key="9">
    <citation type="journal article" date="2001" name="Mol. Cell. Neurosci.">
        <title>An alternative amino-terminus expressed in the central nervous system converts agrin to a type II transmembrane protein.</title>
        <authorList>
            <person name="Neumann F.R."/>
            <person name="Bittcher G."/>
            <person name="Annies M."/>
            <person name="Schumacher B."/>
            <person name="Kroger S."/>
            <person name="Ruegg M.A."/>
        </authorList>
    </citation>
    <scope>ALTERNATIVE SPLICING (ISOFORMS 1 AND 9)</scope>
    <scope>SUBCELLULAR LOCATION</scope>
</reference>
<reference key="10">
    <citation type="journal article" date="2003" name="J. Biol. Chem.">
        <title>Agrin is a chimeric proteoglycan with the attachment sites for heparan sulfate/chondroitin sulfate located in two multiple serine-glycine clusters.</title>
        <authorList>
            <person name="Winzen U."/>
            <person name="Cole G.J."/>
            <person name="Halfter W."/>
        </authorList>
    </citation>
    <scope>GLYCOSYLATION</scope>
    <scope>MUTAGENESIS OF SER-672; SER-675; SER-677; SER-1073; SER-1079; SER-1087 AND SER-1093</scope>
</reference>
<reference key="11">
    <citation type="journal article" date="2004" name="J. Neurochem.">
        <title>Glycosaminoglycan-dependent and -independent inhibition of neurite outgrowth by agrin.</title>
        <authorList>
            <person name="Baerwald-de la Torre K."/>
            <person name="Winzen U."/>
            <person name="Halfter W."/>
            <person name="Bixby J.L."/>
        </authorList>
    </citation>
    <scope>HEPARAN SULFATE BINDING</scope>
    <scope>CHONDROITIN SULFATE BINDING</scope>
    <scope>FUNCTION</scope>
</reference>
<reference key="12">
    <citation type="journal article" date="2006" name="J. Biol. Chem.">
        <title>Activation of muscle-specific receptor tyrosine kinase and binding to dystroglycan are regulated by alternative mRNA splicing of agrin.</title>
        <authorList>
            <person name="Scotton P."/>
            <person name="Bleckmann D."/>
            <person name="Stebler M."/>
            <person name="Sciandra F."/>
            <person name="Brancaccio A."/>
            <person name="Meier T."/>
            <person name="Stetefeld J."/>
            <person name="Ruegg M.A."/>
        </authorList>
    </citation>
    <scope>FUNCTION</scope>
    <scope>ALTERNATIVE SPLICING</scope>
    <scope>INTERACTION WITH DAG1</scope>
    <scope>HEPARIN BINDING</scope>
    <scope>MUTAGENESIS OF ASN-1905; GLU-1906; ILE-1907; 1905-ASN--ILE-1907 AND 1902-HIS--PRO-1908</scope>
</reference>
<reference key="13">
    <citation type="journal article" date="2007" name="Biochemistry">
        <title>Thermodynamic and structural studies of carbohydrate binding by the agrin-G3 domain.</title>
        <authorList>
            <person name="Sallum C.O."/>
            <person name="Kammerer R.A."/>
            <person name="Alexandrescu A.T."/>
        </authorList>
    </citation>
    <scope>INTERACTION WITH DAG1</scope>
    <scope>STRUCTURE OF CARBOHYDRATES</scope>
    <scope>FUNCTION</scope>
</reference>
<reference key="14">
    <citation type="journal article" date="2009" name="Protein Sci.">
        <title>An interdomain disulfide bridge links the NtA and first FS domain in agrin.</title>
        <authorList>
            <person name="McFarlane A.A."/>
            <person name="Stetefeld J."/>
        </authorList>
    </citation>
    <scope>INTERDOMAIN DISULFIDE BOND</scope>
</reference>
<reference key="15">
    <citation type="journal article" date="2010" name="J. Biol. Chem.">
        <title>The process-inducing activity of transmembrane agrin requires follistatin-like domains.</title>
        <authorList>
            <person name="Porten E."/>
            <person name="Seliger B."/>
            <person name="Schneider V.A."/>
            <person name="Woll S."/>
            <person name="Stangel D."/>
            <person name="Ramseger R."/>
            <person name="Kroger S."/>
        </authorList>
    </citation>
    <scope>FUNCTION OF ISOFORM 9</scope>
</reference>
<reference key="16">
    <citation type="journal article" date="2012" name="PLoS ONE">
        <title>Site specific cleavage mediated by MMPs regulates function of agrin.</title>
        <authorList>
            <person name="Patel T.R."/>
            <person name="Butler G."/>
            <person name="McFarlane A."/>
            <person name="Xie I."/>
            <person name="Overall C.M."/>
            <person name="Stetefeld J."/>
        </authorList>
    </citation>
    <scope>PROTEOLYTIC PROCESSING BY MMPS</scope>
    <scope>FUNCTION</scope>
</reference>
<reference key="17">
    <citation type="journal article" date="2001" name="Nat. Struct. Biol.">
        <title>The laminin-binding domain of agrin is structurally related to N-TIMP-1.</title>
        <authorList>
            <person name="Stetefeld J."/>
            <person name="Jenny M."/>
            <person name="Schulthess T."/>
            <person name="Landwehr R."/>
            <person name="Schumacher B."/>
            <person name="Frank S."/>
            <person name="Rueegg M.A."/>
            <person name="Engel J."/>
            <person name="Kammerer R.A."/>
        </authorList>
    </citation>
    <scope>X-RAY CRYSTALLOGRAPHY (1.6 ANGSTROMS) OF 26-156 IN COMPLEX WITH LAMININ</scope>
    <scope>DISULFIDE BOND</scope>
</reference>
<reference key="18">
    <citation type="journal article" date="2004" name="Structure">
        <title>Modulation of agrin function by alternative splicing and Ca2+ binding.</title>
        <authorList>
            <person name="Stetefeld J."/>
            <person name="Alexandrescu A.T."/>
            <person name="Maciejewski M.W."/>
            <person name="Jenny M."/>
            <person name="Rathgeb-Szabo K."/>
            <person name="Schulthess T."/>
            <person name="Landwehr R."/>
            <person name="Frank S."/>
            <person name="Rueegg M.A."/>
            <person name="Kammerer R.A."/>
        </authorList>
    </citation>
    <scope>STRUCTURE BY NMR OF 1870-2081 IN COMPLEX WITH CALCIUM IONS</scope>
    <scope>X-RAY CRYSTALLOGRAPHY (1.42 ANGSTROMS) OF 1870-2081 IN COMPLEX WITH CALCIUM IONS</scope>
    <scope>DISULFIDE BOND</scope>
</reference>
<reference key="19">
    <citation type="journal article" date="2005" name="Matrix Biol.">
        <title>Structure and laminin-binding specificity of the NtA domain expressed in eukaryotic cells.</title>
        <authorList>
            <person name="Mascarenhas J.B."/>
            <person name="Rueegg M.A."/>
            <person name="Sasaki T."/>
            <person name="Eble J.A."/>
            <person name="Engel J."/>
            <person name="Stetefeld J."/>
        </authorList>
    </citation>
    <scope>X-RAY CRYSTALLOGRAPHY (2.2 ANGSTROMS) OF 26-156</scope>
    <scope>INTERACTION WITH LAMININ</scope>
    <scope>DISULFIDE BOND</scope>
</reference>
<keyword id="KW-0002">3D-structure</keyword>
<keyword id="KW-0025">Alternative splicing</keyword>
<keyword id="KW-0106">Calcium</keyword>
<keyword id="KW-1003">Cell membrane</keyword>
<keyword id="KW-0217">Developmental protein</keyword>
<keyword id="KW-0221">Differentiation</keyword>
<keyword id="KW-1015">Disulfide bond</keyword>
<keyword id="KW-0245">EGF-like domain</keyword>
<keyword id="KW-0272">Extracellular matrix</keyword>
<keyword id="KW-0325">Glycoprotein</keyword>
<keyword id="KW-0357">Heparan sulfate</keyword>
<keyword id="KW-0424">Laminin EGF-like domain</keyword>
<keyword id="KW-0472">Membrane</keyword>
<keyword id="KW-0479">Metal-binding</keyword>
<keyword id="KW-0654">Proteoglycan</keyword>
<keyword id="KW-1185">Reference proteome</keyword>
<keyword id="KW-0677">Repeat</keyword>
<keyword id="KW-0964">Secreted</keyword>
<keyword id="KW-0732">Signal</keyword>
<keyword id="KW-0770">Synapse</keyword>
<keyword id="KW-0812">Transmembrane</keyword>